<protein>
    <recommendedName>
        <fullName>Protein C4</fullName>
    </recommendedName>
    <alternativeName>
        <fullName>10.9 kDa protein</fullName>
    </alternativeName>
    <alternativeName>
        <fullName>Protein L4</fullName>
    </alternativeName>
</protein>
<feature type="initiator methionine" description="Removed" evidence="1">
    <location>
        <position position="1"/>
    </location>
</feature>
<feature type="chain" id="PRO_0000222298" description="Protein C4">
    <location>
        <begin position="2"/>
        <end position="96"/>
    </location>
</feature>
<feature type="region of interest" description="Disordered" evidence="2">
    <location>
        <begin position="66"/>
        <end position="96"/>
    </location>
</feature>
<feature type="compositionally biased region" description="Polar residues" evidence="2">
    <location>
        <begin position="77"/>
        <end position="89"/>
    </location>
</feature>
<feature type="lipid moiety-binding region" description="N-myristoyl glycine; by host" evidence="1">
    <location>
        <position position="2"/>
    </location>
</feature>
<accession>P38612</accession>
<sequence length="96" mass="10850">MGNLISTCSFSSRVNSTAKITDSSIWYPQPDQHISIRTFRELNQAPTSSPTSTRTEMFLNGVLSRSTDDLQGEDSRQPMTLTPRQLTQEVSRRLLM</sequence>
<proteinExistence type="inferred from homology"/>
<evidence type="ECO:0000250" key="1"/>
<evidence type="ECO:0000256" key="2">
    <source>
        <dbReference type="SAM" id="MobiDB-lite"/>
    </source>
</evidence>
<evidence type="ECO:0000305" key="3"/>
<reference key="1">
    <citation type="journal article" date="1994" name="Arch. Virol.">
        <title>High similarity among the tomato yellow leaf curl virus isolates from the west Mediterranean basin: the nucleotide sequence of an infectious clone from Spain.</title>
        <authorList>
            <person name="Noris E."/>
            <person name="Hidalgo E."/>
            <person name="Accotto G.P."/>
            <person name="Moriones E."/>
        </authorList>
    </citation>
    <scope>NUCLEOTIDE SEQUENCE [GENOMIC DNA]</scope>
</reference>
<name>AC4_TYCS1</name>
<comment type="function">
    <text evidence="1">Pathogenicity determinant (By similarity). May act as a suppressor of RNA-mediated gene silencing, also known as post-transcriptional gene silencing (PTGS), a mechanism of plant viral defense that limits the accumulation of viral RNAs.</text>
</comment>
<comment type="subcellular location">
    <subcellularLocation>
        <location evidence="1">Host cell membrane</location>
        <topology evidence="1">Lipid-anchor</topology>
    </subcellularLocation>
    <text evidence="1">Localizes to the cell periphery.</text>
</comment>
<comment type="similarity">
    <text evidence="3">Belongs to the geminiviridae protein AC4/C4 family.</text>
</comment>
<organismHost>
    <name type="scientific">Cynanchum acutum</name>
    <dbReference type="NCBI Taxonomy" id="185024"/>
</organismHost>
<organismHost>
    <name type="scientific">Solanum lycopersicum</name>
    <name type="common">Tomato</name>
    <name type="synonym">Lycopersicon esculentum</name>
    <dbReference type="NCBI Taxonomy" id="4081"/>
</organismHost>
<organismHost>
    <name type="scientific">Solanum nigrum</name>
    <name type="common">Black nightshade</name>
    <dbReference type="NCBI Taxonomy" id="4112"/>
</organismHost>
<keyword id="KW-1032">Host cell membrane</keyword>
<keyword id="KW-1043">Host membrane</keyword>
<keyword id="KW-0945">Host-virus interaction</keyword>
<keyword id="KW-1090">Inhibition of host innate immune response by virus</keyword>
<keyword id="KW-0449">Lipoprotein</keyword>
<keyword id="KW-0472">Membrane</keyword>
<keyword id="KW-0519">Myristate</keyword>
<keyword id="KW-0941">Suppressor of RNA silencing</keyword>
<keyword id="KW-0899">Viral immunoevasion</keyword>
<dbReference type="EMBL" id="Z25751">
    <property type="protein sequence ID" value="CAA81029.1"/>
    <property type="molecule type" value="Genomic_DNA"/>
</dbReference>
<dbReference type="Proteomes" id="UP000008265">
    <property type="component" value="Genome"/>
</dbReference>
<dbReference type="GO" id="GO:0020002">
    <property type="term" value="C:host cell plasma membrane"/>
    <property type="evidence" value="ECO:0007669"/>
    <property type="project" value="UniProtKB-SubCell"/>
</dbReference>
<dbReference type="GO" id="GO:0016020">
    <property type="term" value="C:membrane"/>
    <property type="evidence" value="ECO:0007669"/>
    <property type="project" value="UniProtKB-KW"/>
</dbReference>
<dbReference type="GO" id="GO:0052170">
    <property type="term" value="P:symbiont-mediated suppression of host innate immune response"/>
    <property type="evidence" value="ECO:0007669"/>
    <property type="project" value="UniProtKB-KW"/>
</dbReference>
<dbReference type="InterPro" id="IPR002488">
    <property type="entry name" value="Gemini_C4"/>
</dbReference>
<dbReference type="Pfam" id="PF01492">
    <property type="entry name" value="Gemini_C4"/>
    <property type="match status" value="1"/>
</dbReference>
<organism>
    <name type="scientific">Tomato yellow leaf curl Sardinia virus (isolate Spain-1)</name>
    <name type="common">TYLCSV</name>
    <dbReference type="NCBI Taxonomy" id="37139"/>
    <lineage>
        <taxon>Viruses</taxon>
        <taxon>Monodnaviria</taxon>
        <taxon>Shotokuvirae</taxon>
        <taxon>Cressdnaviricota</taxon>
        <taxon>Repensiviricetes</taxon>
        <taxon>Geplafuvirales</taxon>
        <taxon>Geminiviridae</taxon>
        <taxon>Begomovirus</taxon>
        <taxon>Tomato yellow leaf curl virus</taxon>
    </lineage>
</organism>
<gene>
    <name type="ORF">C4</name>
    <name type="ORF">L4</name>
</gene>